<evidence type="ECO:0000250" key="1">
    <source>
        <dbReference type="UniProtKB" id="P23301"/>
    </source>
</evidence>
<evidence type="ECO:0000250" key="2">
    <source>
        <dbReference type="UniProtKB" id="Q9XI91"/>
    </source>
</evidence>
<evidence type="ECO:0000256" key="3">
    <source>
        <dbReference type="SAM" id="MobiDB-lite"/>
    </source>
</evidence>
<evidence type="ECO:0000305" key="4"/>
<keyword id="KW-0385">Hypusine</keyword>
<keyword id="KW-0396">Initiation factor</keyword>
<keyword id="KW-0648">Protein biosynthesis</keyword>
<keyword id="KW-1185">Reference proteome</keyword>
<sequence length="160" mass="17517">MSDEEHHFESKADAGASKTYPQQAGTIRKNGYIVIKGRPCKVVEVSTSKTGKHGHAKCHFVAIDIFNAKKLEDIVPSSHNCDVPHVNRTDYQLIDISEDGFVSLLTENGNTKDDLRLPTDDTLLNQVKGGFEEGKDLVLSVMSAMGEEQICAVKDIGTKT</sequence>
<proteinExistence type="evidence at transcript level"/>
<feature type="chain" id="PRO_0000142470" description="Eukaryotic translation initiation factor 5A-4">
    <location>
        <begin position="1"/>
        <end position="160"/>
    </location>
</feature>
<feature type="region of interest" description="Disordered" evidence="3">
    <location>
        <begin position="1"/>
        <end position="21"/>
    </location>
</feature>
<feature type="compositionally biased region" description="Basic and acidic residues" evidence="3">
    <location>
        <begin position="1"/>
        <end position="12"/>
    </location>
</feature>
<feature type="modified residue" description="Hypusine" evidence="2">
    <location>
        <position position="52"/>
    </location>
</feature>
<dbReference type="EMBL" id="AF296086">
    <property type="protein sequence ID" value="AAG53650.1"/>
    <property type="molecule type" value="mRNA"/>
</dbReference>
<dbReference type="RefSeq" id="NP_001234715.1">
    <property type="nucleotide sequence ID" value="NM_001247786.1"/>
</dbReference>
<dbReference type="SMR" id="Q9AXQ3"/>
<dbReference type="FunCoup" id="Q9AXQ3">
    <property type="interactions" value="1946"/>
</dbReference>
<dbReference type="STRING" id="4081.Q9AXQ3"/>
<dbReference type="PaxDb" id="4081-Solyc12g010060.1.1"/>
<dbReference type="EnsemblPlants" id="Solyc12g010060.2.1">
    <property type="protein sequence ID" value="Solyc12g010060.2.1"/>
    <property type="gene ID" value="Solyc12g010060.2"/>
</dbReference>
<dbReference type="GeneID" id="544227"/>
<dbReference type="Gramene" id="Solyc12g010060.2.1">
    <property type="protein sequence ID" value="Solyc12g010060.2.1"/>
    <property type="gene ID" value="Solyc12g010060.2"/>
</dbReference>
<dbReference type="KEGG" id="sly:544227"/>
<dbReference type="eggNOG" id="KOG3271">
    <property type="taxonomic scope" value="Eukaryota"/>
</dbReference>
<dbReference type="HOGENOM" id="CLU_102600_1_0_1"/>
<dbReference type="InParanoid" id="Q9AXQ3"/>
<dbReference type="OMA" id="KREDYQV"/>
<dbReference type="OrthoDB" id="9975114at2759"/>
<dbReference type="PhylomeDB" id="Q9AXQ3"/>
<dbReference type="Proteomes" id="UP000004994">
    <property type="component" value="Chromosome 12"/>
</dbReference>
<dbReference type="GO" id="GO:0043022">
    <property type="term" value="F:ribosome binding"/>
    <property type="evidence" value="ECO:0007669"/>
    <property type="project" value="InterPro"/>
</dbReference>
<dbReference type="GO" id="GO:0003723">
    <property type="term" value="F:RNA binding"/>
    <property type="evidence" value="ECO:0007669"/>
    <property type="project" value="InterPro"/>
</dbReference>
<dbReference type="GO" id="GO:0003746">
    <property type="term" value="F:translation elongation factor activity"/>
    <property type="evidence" value="ECO:0000318"/>
    <property type="project" value="GO_Central"/>
</dbReference>
<dbReference type="GO" id="GO:0003743">
    <property type="term" value="F:translation initiation factor activity"/>
    <property type="evidence" value="ECO:0007669"/>
    <property type="project" value="UniProtKB-KW"/>
</dbReference>
<dbReference type="GO" id="GO:0045901">
    <property type="term" value="P:positive regulation of translational elongation"/>
    <property type="evidence" value="ECO:0007669"/>
    <property type="project" value="InterPro"/>
</dbReference>
<dbReference type="GO" id="GO:0045905">
    <property type="term" value="P:positive regulation of translational termination"/>
    <property type="evidence" value="ECO:0007669"/>
    <property type="project" value="InterPro"/>
</dbReference>
<dbReference type="GO" id="GO:0006414">
    <property type="term" value="P:translational elongation"/>
    <property type="evidence" value="ECO:0000318"/>
    <property type="project" value="GO_Central"/>
</dbReference>
<dbReference type="CDD" id="cd04468">
    <property type="entry name" value="S1_eIF5A"/>
    <property type="match status" value="1"/>
</dbReference>
<dbReference type="FunFam" id="2.30.30.30:FF:000012">
    <property type="entry name" value="Eukaryotic translation initiation factor 5A"/>
    <property type="match status" value="1"/>
</dbReference>
<dbReference type="FunFam" id="2.40.50.140:FF:000034">
    <property type="entry name" value="Eukaryotic translation initiation factor 5A"/>
    <property type="match status" value="1"/>
</dbReference>
<dbReference type="Gene3D" id="2.30.30.30">
    <property type="match status" value="1"/>
</dbReference>
<dbReference type="Gene3D" id="2.40.50.140">
    <property type="entry name" value="Nucleic acid-binding proteins"/>
    <property type="match status" value="1"/>
</dbReference>
<dbReference type="InterPro" id="IPR001884">
    <property type="entry name" value="IF5A-like"/>
</dbReference>
<dbReference type="InterPro" id="IPR048670">
    <property type="entry name" value="IF5A-like_N"/>
</dbReference>
<dbReference type="InterPro" id="IPR012340">
    <property type="entry name" value="NA-bd_OB-fold"/>
</dbReference>
<dbReference type="InterPro" id="IPR014722">
    <property type="entry name" value="Rib_uL2_dom2"/>
</dbReference>
<dbReference type="InterPro" id="IPR019769">
    <property type="entry name" value="Trans_elong_IF5A_hypusine_site"/>
</dbReference>
<dbReference type="InterPro" id="IPR020189">
    <property type="entry name" value="Transl_elong_IF5A_C"/>
</dbReference>
<dbReference type="InterPro" id="IPR008991">
    <property type="entry name" value="Translation_prot_SH3-like_sf"/>
</dbReference>
<dbReference type="NCBIfam" id="TIGR00037">
    <property type="entry name" value="eIF_5A"/>
    <property type="match status" value="1"/>
</dbReference>
<dbReference type="PANTHER" id="PTHR11673">
    <property type="entry name" value="TRANSLATION INITIATION FACTOR 5A FAMILY MEMBER"/>
    <property type="match status" value="1"/>
</dbReference>
<dbReference type="Pfam" id="PF01287">
    <property type="entry name" value="eIF-5a"/>
    <property type="match status" value="1"/>
</dbReference>
<dbReference type="Pfam" id="PF21485">
    <property type="entry name" value="IF5A-like_N"/>
    <property type="match status" value="1"/>
</dbReference>
<dbReference type="PIRSF" id="PIRSF003025">
    <property type="entry name" value="eIF5A"/>
    <property type="match status" value="1"/>
</dbReference>
<dbReference type="SMART" id="SM01376">
    <property type="entry name" value="eIF-5a"/>
    <property type="match status" value="1"/>
</dbReference>
<dbReference type="SUPFAM" id="SSF50249">
    <property type="entry name" value="Nucleic acid-binding proteins"/>
    <property type="match status" value="1"/>
</dbReference>
<dbReference type="SUPFAM" id="SSF50104">
    <property type="entry name" value="Translation proteins SH3-like domain"/>
    <property type="match status" value="1"/>
</dbReference>
<dbReference type="PROSITE" id="PS00302">
    <property type="entry name" value="IF5A_HYPUSINE"/>
    <property type="match status" value="1"/>
</dbReference>
<reference key="1">
    <citation type="journal article" date="2001" name="J. Biol. Chem.">
        <title>Isolation and characterization of senescence-induced cDNAs encoding deoxyhypusine synthase and eucaryotic translation initiation factor 5A from tomato.</title>
        <authorList>
            <person name="Wang T.-W."/>
            <person name="Lu L."/>
            <person name="Wang D."/>
            <person name="Thompson J.E."/>
        </authorList>
    </citation>
    <scope>NUCLEOTIDE SEQUENCE [MRNA]</scope>
    <source>
        <strain>cv. Match</strain>
    </source>
</reference>
<name>IF5A4_SOLLC</name>
<protein>
    <recommendedName>
        <fullName>Eukaryotic translation initiation factor 5A-4</fullName>
        <shortName>eIF-5A-4</shortName>
    </recommendedName>
</protein>
<accession>Q9AXQ3</accession>
<comment type="function">
    <text evidence="1">Translation factor that promotes translation elongation and termination, particularly upon ribosome stalling at specific amino acid sequence contexts (By similarity). Binds between the exit (E) and peptidyl (P) site of the ribosome and promotes rescue of stalled ribosome: specifically required for efficient translation of polyproline-containing peptides as well as other motifs that stall the ribosome (By similarity). Acts as a ribosome quality control (RQC) cofactor by joining the RQC complex to facilitate peptidyl transfer during CAT tailing step (By similarity).</text>
</comment>
<comment type="PTM">
    <text evidence="2">Lys-52 undergoes hypusination, a unique post-translational modification that consists in the addition of a butylamino group from spermidine to lysine side chain, leading to the formation of the unusual amino acid hypusine. eIF-5As are the only known proteins to undergo this modification, which is essential for their function.</text>
</comment>
<comment type="similarity">
    <text evidence="4">Belongs to the eIF-5A family.</text>
</comment>
<organism>
    <name type="scientific">Solanum lycopersicum</name>
    <name type="common">Tomato</name>
    <name type="synonym">Lycopersicon esculentum</name>
    <dbReference type="NCBI Taxonomy" id="4081"/>
    <lineage>
        <taxon>Eukaryota</taxon>
        <taxon>Viridiplantae</taxon>
        <taxon>Streptophyta</taxon>
        <taxon>Embryophyta</taxon>
        <taxon>Tracheophyta</taxon>
        <taxon>Spermatophyta</taxon>
        <taxon>Magnoliopsida</taxon>
        <taxon>eudicotyledons</taxon>
        <taxon>Gunneridae</taxon>
        <taxon>Pentapetalae</taxon>
        <taxon>asterids</taxon>
        <taxon>lamiids</taxon>
        <taxon>Solanales</taxon>
        <taxon>Solanaceae</taxon>
        <taxon>Solanoideae</taxon>
        <taxon>Solaneae</taxon>
        <taxon>Solanum</taxon>
        <taxon>Solanum subgen. Lycopersicon</taxon>
    </lineage>
</organism>